<protein>
    <recommendedName>
        <fullName evidence="1">Adenosylcobinamide-GDP ribazoletransferase</fullName>
        <ecNumber evidence="1">2.7.8.26</ecNumber>
    </recommendedName>
    <alternativeName>
        <fullName evidence="1">Cobalamin synthase</fullName>
    </alternativeName>
    <alternativeName>
        <fullName evidence="1">Cobalamin-5'-phosphate synthase</fullName>
    </alternativeName>
</protein>
<accession>Q7VDR6</accession>
<evidence type="ECO:0000255" key="1">
    <source>
        <dbReference type="HAMAP-Rule" id="MF_00719"/>
    </source>
</evidence>
<proteinExistence type="inferred from homology"/>
<comment type="function">
    <text evidence="1">Joins adenosylcobinamide-GDP and alpha-ribazole to generate adenosylcobalamin (Ado-cobalamin). Also synthesizes adenosylcobalamin 5'-phosphate from adenosylcobinamide-GDP and alpha-ribazole 5'-phosphate.</text>
</comment>
<comment type="catalytic activity">
    <reaction evidence="1">
        <text>alpha-ribazole + adenosylcob(III)inamide-GDP = adenosylcob(III)alamin + GMP + H(+)</text>
        <dbReference type="Rhea" id="RHEA:16049"/>
        <dbReference type="ChEBI" id="CHEBI:10329"/>
        <dbReference type="ChEBI" id="CHEBI:15378"/>
        <dbReference type="ChEBI" id="CHEBI:18408"/>
        <dbReference type="ChEBI" id="CHEBI:58115"/>
        <dbReference type="ChEBI" id="CHEBI:60487"/>
        <dbReference type="EC" id="2.7.8.26"/>
    </reaction>
</comment>
<comment type="catalytic activity">
    <reaction evidence="1">
        <text>alpha-ribazole 5'-phosphate + adenosylcob(III)inamide-GDP = adenosylcob(III)alamin 5'-phosphate + GMP + H(+)</text>
        <dbReference type="Rhea" id="RHEA:23560"/>
        <dbReference type="ChEBI" id="CHEBI:15378"/>
        <dbReference type="ChEBI" id="CHEBI:57918"/>
        <dbReference type="ChEBI" id="CHEBI:58115"/>
        <dbReference type="ChEBI" id="CHEBI:60487"/>
        <dbReference type="ChEBI" id="CHEBI:60493"/>
        <dbReference type="EC" id="2.7.8.26"/>
    </reaction>
</comment>
<comment type="cofactor">
    <cofactor evidence="1">
        <name>Mg(2+)</name>
        <dbReference type="ChEBI" id="CHEBI:18420"/>
    </cofactor>
</comment>
<comment type="pathway">
    <text evidence="1">Cofactor biosynthesis; adenosylcobalamin biosynthesis; adenosylcobalamin from cob(II)yrinate a,c-diamide: step 7/7.</text>
</comment>
<comment type="subcellular location">
    <subcellularLocation>
        <location evidence="1">Cell inner membrane</location>
        <topology evidence="1">Multi-pass membrane protein</topology>
    </subcellularLocation>
</comment>
<comment type="similarity">
    <text evidence="1">Belongs to the CobS family.</text>
</comment>
<feature type="chain" id="PRO_1000083260" description="Adenosylcobinamide-GDP ribazoletransferase">
    <location>
        <begin position="1"/>
        <end position="259"/>
    </location>
</feature>
<feature type="transmembrane region" description="Helical" evidence="1">
    <location>
        <begin position="36"/>
        <end position="56"/>
    </location>
</feature>
<feature type="transmembrane region" description="Helical" evidence="1">
    <location>
        <begin position="65"/>
        <end position="85"/>
    </location>
</feature>
<feature type="transmembrane region" description="Helical" evidence="1">
    <location>
        <begin position="108"/>
        <end position="128"/>
    </location>
</feature>
<feature type="transmembrane region" description="Helical" evidence="1">
    <location>
        <begin position="133"/>
        <end position="153"/>
    </location>
</feature>
<feature type="transmembrane region" description="Helical" evidence="1">
    <location>
        <begin position="175"/>
        <end position="195"/>
    </location>
</feature>
<feature type="transmembrane region" description="Helical" evidence="1">
    <location>
        <begin position="201"/>
        <end position="221"/>
    </location>
</feature>
<feature type="transmembrane region" description="Helical" evidence="1">
    <location>
        <begin position="238"/>
        <end position="258"/>
    </location>
</feature>
<reference key="1">
    <citation type="journal article" date="2003" name="Proc. Natl. Acad. Sci. U.S.A.">
        <title>Genome sequence of the cyanobacterium Prochlorococcus marinus SS120, a nearly minimal oxyphototrophic genome.</title>
        <authorList>
            <person name="Dufresne A."/>
            <person name="Salanoubat M."/>
            <person name="Partensky F."/>
            <person name="Artiguenave F."/>
            <person name="Axmann I.M."/>
            <person name="Barbe V."/>
            <person name="Duprat S."/>
            <person name="Galperin M.Y."/>
            <person name="Koonin E.V."/>
            <person name="Le Gall F."/>
            <person name="Makarova K.S."/>
            <person name="Ostrowski M."/>
            <person name="Oztas S."/>
            <person name="Robert C."/>
            <person name="Rogozin I.B."/>
            <person name="Scanlan D.J."/>
            <person name="Tandeau de Marsac N."/>
            <person name="Weissenbach J."/>
            <person name="Wincker P."/>
            <person name="Wolf Y.I."/>
            <person name="Hess W.R."/>
        </authorList>
    </citation>
    <scope>NUCLEOTIDE SEQUENCE [LARGE SCALE GENOMIC DNA]</scope>
    <source>
        <strain>SARG / CCMP1375 / SS120</strain>
    </source>
</reference>
<keyword id="KW-0997">Cell inner membrane</keyword>
<keyword id="KW-1003">Cell membrane</keyword>
<keyword id="KW-0169">Cobalamin biosynthesis</keyword>
<keyword id="KW-0460">Magnesium</keyword>
<keyword id="KW-0472">Membrane</keyword>
<keyword id="KW-1185">Reference proteome</keyword>
<keyword id="KW-0808">Transferase</keyword>
<keyword id="KW-0812">Transmembrane</keyword>
<keyword id="KW-1133">Transmembrane helix</keyword>
<sequence length="259" mass="28598">MSSPNWLKDLTGAWLFYTVFPKLTRINPRFERIARFSPLIGVLIGVLQVSVLILLLQLQWPNESMPFIAIALGLWITGGIHVDGLMDTADGIAAGPSRCIEAMKDSRIGASGIIALTINLLLQIAALFKLRLLILFAIPIASFWGRYSQIWAISHYPYLNKEGSSKFLHKKNWRGFLIESIPSYAFLSFLIFILINIDISIISTPNLIIGIIVGFLPALIIPHLLARRLGGHSGDSYGASVVLVETCMLIIFSIILPAS</sequence>
<name>COBS_PROMA</name>
<gene>
    <name evidence="1" type="primary">cobS</name>
    <name type="ordered locus">Pro_0302</name>
</gene>
<dbReference type="EC" id="2.7.8.26" evidence="1"/>
<dbReference type="EMBL" id="AE017126">
    <property type="protein sequence ID" value="AAP99348.1"/>
    <property type="molecule type" value="Genomic_DNA"/>
</dbReference>
<dbReference type="RefSeq" id="NP_874696.1">
    <property type="nucleotide sequence ID" value="NC_005042.1"/>
</dbReference>
<dbReference type="STRING" id="167539.Pro_0302"/>
<dbReference type="EnsemblBacteria" id="AAP99348">
    <property type="protein sequence ID" value="AAP99348"/>
    <property type="gene ID" value="Pro_0302"/>
</dbReference>
<dbReference type="KEGG" id="pma:Pro_0302"/>
<dbReference type="PATRIC" id="fig|167539.5.peg.311"/>
<dbReference type="eggNOG" id="COG0368">
    <property type="taxonomic scope" value="Bacteria"/>
</dbReference>
<dbReference type="HOGENOM" id="CLU_057426_3_0_3"/>
<dbReference type="OrthoDB" id="9794626at2"/>
<dbReference type="UniPathway" id="UPA00148">
    <property type="reaction ID" value="UER00238"/>
</dbReference>
<dbReference type="Proteomes" id="UP000001420">
    <property type="component" value="Chromosome"/>
</dbReference>
<dbReference type="GO" id="GO:0005886">
    <property type="term" value="C:plasma membrane"/>
    <property type="evidence" value="ECO:0007669"/>
    <property type="project" value="UniProtKB-SubCell"/>
</dbReference>
<dbReference type="GO" id="GO:0051073">
    <property type="term" value="F:adenosylcobinamide-GDP ribazoletransferase activity"/>
    <property type="evidence" value="ECO:0007669"/>
    <property type="project" value="UniProtKB-UniRule"/>
</dbReference>
<dbReference type="GO" id="GO:0008818">
    <property type="term" value="F:cobalamin 5'-phosphate synthase activity"/>
    <property type="evidence" value="ECO:0007669"/>
    <property type="project" value="UniProtKB-UniRule"/>
</dbReference>
<dbReference type="GO" id="GO:0009236">
    <property type="term" value="P:cobalamin biosynthetic process"/>
    <property type="evidence" value="ECO:0007669"/>
    <property type="project" value="UniProtKB-UniRule"/>
</dbReference>
<dbReference type="HAMAP" id="MF_00719">
    <property type="entry name" value="CobS"/>
    <property type="match status" value="1"/>
</dbReference>
<dbReference type="InterPro" id="IPR003805">
    <property type="entry name" value="CobS"/>
</dbReference>
<dbReference type="NCBIfam" id="TIGR00317">
    <property type="entry name" value="cobS"/>
    <property type="match status" value="1"/>
</dbReference>
<dbReference type="PANTHER" id="PTHR34148">
    <property type="entry name" value="ADENOSYLCOBINAMIDE-GDP RIBAZOLETRANSFERASE"/>
    <property type="match status" value="1"/>
</dbReference>
<dbReference type="PANTHER" id="PTHR34148:SF1">
    <property type="entry name" value="ADENOSYLCOBINAMIDE-GDP RIBAZOLETRANSFERASE"/>
    <property type="match status" value="1"/>
</dbReference>
<dbReference type="Pfam" id="PF02654">
    <property type="entry name" value="CobS"/>
    <property type="match status" value="1"/>
</dbReference>
<organism>
    <name type="scientific">Prochlorococcus marinus (strain SARG / CCMP1375 / SS120)</name>
    <dbReference type="NCBI Taxonomy" id="167539"/>
    <lineage>
        <taxon>Bacteria</taxon>
        <taxon>Bacillati</taxon>
        <taxon>Cyanobacteriota</taxon>
        <taxon>Cyanophyceae</taxon>
        <taxon>Synechococcales</taxon>
        <taxon>Prochlorococcaceae</taxon>
        <taxon>Prochlorococcus</taxon>
    </lineage>
</organism>